<accession>Q5UQ51</accession>
<dbReference type="EMBL" id="AY653733">
    <property type="protein sequence ID" value="AAV50928.1"/>
    <property type="molecule type" value="Genomic_DNA"/>
</dbReference>
<dbReference type="KEGG" id="vg:9925313"/>
<dbReference type="Proteomes" id="UP000001134">
    <property type="component" value="Genome"/>
</dbReference>
<proteinExistence type="predicted"/>
<gene>
    <name type="ordered locus">MIMI_R667</name>
</gene>
<name>YR667_MIMIV</name>
<sequence>MTDKSKKSKKLKTQYGSVRYSNFINKAIQLYGCQYTYGEYINMTTRMMIICNQCRDVMYETPKNHLHQKAICQKCHKIPDKPKKYLINTKQKYLEQFAKIYGEKFDFSQFDYQGYYEDAEIICNNCKQKQTFTIRKLLNGTKCSFCAER</sequence>
<keyword id="KW-1185">Reference proteome</keyword>
<organism>
    <name type="scientific">Acanthamoeba polyphaga mimivirus</name>
    <name type="common">APMV</name>
    <dbReference type="NCBI Taxonomy" id="212035"/>
    <lineage>
        <taxon>Viruses</taxon>
        <taxon>Varidnaviria</taxon>
        <taxon>Bamfordvirae</taxon>
        <taxon>Nucleocytoviricota</taxon>
        <taxon>Megaviricetes</taxon>
        <taxon>Imitervirales</taxon>
        <taxon>Mimiviridae</taxon>
        <taxon>Megamimivirinae</taxon>
        <taxon>Mimivirus</taxon>
        <taxon>Mimivirus bradfordmassiliense</taxon>
    </lineage>
</organism>
<reference key="1">
    <citation type="journal article" date="2004" name="Science">
        <title>The 1.2-megabase genome sequence of Mimivirus.</title>
        <authorList>
            <person name="Raoult D."/>
            <person name="Audic S."/>
            <person name="Robert C."/>
            <person name="Abergel C."/>
            <person name="Renesto P."/>
            <person name="Ogata H."/>
            <person name="La Scola B."/>
            <person name="Susan M."/>
            <person name="Claverie J.-M."/>
        </authorList>
    </citation>
    <scope>NUCLEOTIDE SEQUENCE [LARGE SCALE GENOMIC DNA]</scope>
    <source>
        <strain>Rowbotham-Bradford</strain>
    </source>
</reference>
<organismHost>
    <name type="scientific">Acanthamoeba polyphaga</name>
    <name type="common">Amoeba</name>
    <dbReference type="NCBI Taxonomy" id="5757"/>
</organismHost>
<protein>
    <recommendedName>
        <fullName>Uncharacterized protein R667</fullName>
    </recommendedName>
</protein>
<feature type="chain" id="PRO_0000253211" description="Uncharacterized protein R667">
    <location>
        <begin position="1"/>
        <end position="149"/>
    </location>
</feature>